<gene>
    <name type="primary">Ptpn7</name>
</gene>
<proteinExistence type="evidence at protein level"/>
<protein>
    <recommendedName>
        <fullName>Tyrosine-protein phosphatase non-receptor type 7</fullName>
        <ecNumber>3.1.3.48</ecNumber>
    </recommendedName>
    <alternativeName>
        <fullName>Hematopoietic protein-tyrosine phosphatase</fullName>
        <shortName>HEPTP</shortName>
    </alternativeName>
</protein>
<accession>Q8BUM3</accession>
<comment type="function">
    <text evidence="1">May play a role in the regulation of T and B-lymphocyte development and signal transduction.</text>
</comment>
<comment type="catalytic activity">
    <reaction evidence="4">
        <text>O-phospho-L-tyrosyl-[protein] + H2O = L-tyrosyl-[protein] + phosphate</text>
        <dbReference type="Rhea" id="RHEA:10684"/>
        <dbReference type="Rhea" id="RHEA-COMP:10136"/>
        <dbReference type="Rhea" id="RHEA-COMP:20101"/>
        <dbReference type="ChEBI" id="CHEBI:15377"/>
        <dbReference type="ChEBI" id="CHEBI:43474"/>
        <dbReference type="ChEBI" id="CHEBI:46858"/>
        <dbReference type="ChEBI" id="CHEBI:61978"/>
        <dbReference type="EC" id="3.1.3.48"/>
    </reaction>
</comment>
<comment type="activity regulation">
    <text evidence="6">Inhibited upon FCER1A triggering.</text>
</comment>
<comment type="subcellular location">
    <subcellularLocation>
        <location evidence="6">Cytoplasm</location>
    </subcellularLocation>
    <subcellularLocation>
        <location evidence="6">Cytoplasm</location>
        <location evidence="6">Cytoskeleton</location>
    </subcellularLocation>
    <text>Oxidized form is preferentially associated with actin cytoskeleton.</text>
</comment>
<comment type="tissue specificity">
    <text evidence="6">Expressed in bone marrow-derived mast cells.</text>
</comment>
<comment type="PTM">
    <text evidence="6">Oxidized at active site cysteine. Treatment with pervanadate (vanadate and H(2)O(2)) or with antigen enhanced oxidation of active site cysteine.</text>
</comment>
<comment type="similarity">
    <text evidence="7">Belongs to the protein-tyrosine phosphatase family. Non-receptor class subfamily.</text>
</comment>
<organism>
    <name type="scientific">Mus musculus</name>
    <name type="common">Mouse</name>
    <dbReference type="NCBI Taxonomy" id="10090"/>
    <lineage>
        <taxon>Eukaryota</taxon>
        <taxon>Metazoa</taxon>
        <taxon>Chordata</taxon>
        <taxon>Craniata</taxon>
        <taxon>Vertebrata</taxon>
        <taxon>Euteleostomi</taxon>
        <taxon>Mammalia</taxon>
        <taxon>Eutheria</taxon>
        <taxon>Euarchontoglires</taxon>
        <taxon>Glires</taxon>
        <taxon>Rodentia</taxon>
        <taxon>Myomorpha</taxon>
        <taxon>Muroidea</taxon>
        <taxon>Muridae</taxon>
        <taxon>Murinae</taxon>
        <taxon>Mus</taxon>
        <taxon>Mus</taxon>
    </lineage>
</organism>
<feature type="chain" id="PRO_0000094762" description="Tyrosine-protein phosphatase non-receptor type 7">
    <location>
        <begin position="1"/>
        <end position="359"/>
    </location>
</feature>
<feature type="domain" description="Tyrosine-protein phosphatase" evidence="3">
    <location>
        <begin position="97"/>
        <end position="349"/>
    </location>
</feature>
<feature type="region of interest" description="Disordered" evidence="5">
    <location>
        <begin position="1"/>
        <end position="33"/>
    </location>
</feature>
<feature type="region of interest" description="Interaction with MAP kinases" evidence="1">
    <location>
        <begin position="38"/>
        <end position="51"/>
    </location>
</feature>
<feature type="active site" description="Phosphocysteine intermediate" evidence="3 4">
    <location>
        <position position="290"/>
    </location>
</feature>
<feature type="binding site" evidence="1">
    <location>
        <position position="257"/>
    </location>
    <ligand>
        <name>substrate</name>
    </ligand>
</feature>
<feature type="binding site" evidence="1">
    <location>
        <begin position="290"/>
        <end position="296"/>
    </location>
    <ligand>
        <name>substrate</name>
    </ligand>
</feature>
<feature type="binding site" evidence="1">
    <location>
        <position position="334"/>
    </location>
    <ligand>
        <name>substrate</name>
    </ligand>
</feature>
<feature type="modified residue" description="Phosphoserine" evidence="2">
    <location>
        <position position="44"/>
    </location>
</feature>
<feature type="modified residue" description="Phosphothreonine" evidence="2">
    <location>
        <position position="66"/>
    </location>
</feature>
<feature type="modified residue" description="Phosphoserine" evidence="8">
    <location>
        <position position="93"/>
    </location>
</feature>
<feature type="modified residue" description="Phosphoserine" evidence="8">
    <location>
        <position position="143"/>
    </location>
</feature>
<feature type="modified residue" description="Cysteine sulfenic acid (-SOH)" evidence="6">
    <location>
        <position position="290"/>
    </location>
</feature>
<name>PTN7_MOUSE</name>
<keyword id="KW-0963">Cytoplasm</keyword>
<keyword id="KW-0206">Cytoskeleton</keyword>
<keyword id="KW-0378">Hydrolase</keyword>
<keyword id="KW-0558">Oxidation</keyword>
<keyword id="KW-0597">Phosphoprotein</keyword>
<keyword id="KW-0904">Protein phosphatase</keyword>
<keyword id="KW-1185">Reference proteome</keyword>
<evidence type="ECO:0000250" key="1"/>
<evidence type="ECO:0000250" key="2">
    <source>
        <dbReference type="UniProtKB" id="P35236"/>
    </source>
</evidence>
<evidence type="ECO:0000255" key="3">
    <source>
        <dbReference type="PROSITE-ProRule" id="PRU00160"/>
    </source>
</evidence>
<evidence type="ECO:0000255" key="4">
    <source>
        <dbReference type="PROSITE-ProRule" id="PRU10044"/>
    </source>
</evidence>
<evidence type="ECO:0000256" key="5">
    <source>
        <dbReference type="SAM" id="MobiDB-lite"/>
    </source>
</evidence>
<evidence type="ECO:0000269" key="6">
    <source>
    </source>
</evidence>
<evidence type="ECO:0000305" key="7"/>
<evidence type="ECO:0007744" key="8">
    <source>
    </source>
</evidence>
<reference key="1">
    <citation type="journal article" date="2005" name="Science">
        <title>The transcriptional landscape of the mammalian genome.</title>
        <authorList>
            <person name="Carninci P."/>
            <person name="Kasukawa T."/>
            <person name="Katayama S."/>
            <person name="Gough J."/>
            <person name="Frith M.C."/>
            <person name="Maeda N."/>
            <person name="Oyama R."/>
            <person name="Ravasi T."/>
            <person name="Lenhard B."/>
            <person name="Wells C."/>
            <person name="Kodzius R."/>
            <person name="Shimokawa K."/>
            <person name="Bajic V.B."/>
            <person name="Brenner S.E."/>
            <person name="Batalov S."/>
            <person name="Forrest A.R."/>
            <person name="Zavolan M."/>
            <person name="Davis M.J."/>
            <person name="Wilming L.G."/>
            <person name="Aidinis V."/>
            <person name="Allen J.E."/>
            <person name="Ambesi-Impiombato A."/>
            <person name="Apweiler R."/>
            <person name="Aturaliya R.N."/>
            <person name="Bailey T.L."/>
            <person name="Bansal M."/>
            <person name="Baxter L."/>
            <person name="Beisel K.W."/>
            <person name="Bersano T."/>
            <person name="Bono H."/>
            <person name="Chalk A.M."/>
            <person name="Chiu K.P."/>
            <person name="Choudhary V."/>
            <person name="Christoffels A."/>
            <person name="Clutterbuck D.R."/>
            <person name="Crowe M.L."/>
            <person name="Dalla E."/>
            <person name="Dalrymple B.P."/>
            <person name="de Bono B."/>
            <person name="Della Gatta G."/>
            <person name="di Bernardo D."/>
            <person name="Down T."/>
            <person name="Engstrom P."/>
            <person name="Fagiolini M."/>
            <person name="Faulkner G."/>
            <person name="Fletcher C.F."/>
            <person name="Fukushima T."/>
            <person name="Furuno M."/>
            <person name="Futaki S."/>
            <person name="Gariboldi M."/>
            <person name="Georgii-Hemming P."/>
            <person name="Gingeras T.R."/>
            <person name="Gojobori T."/>
            <person name="Green R.E."/>
            <person name="Gustincich S."/>
            <person name="Harbers M."/>
            <person name="Hayashi Y."/>
            <person name="Hensch T.K."/>
            <person name="Hirokawa N."/>
            <person name="Hill D."/>
            <person name="Huminiecki L."/>
            <person name="Iacono M."/>
            <person name="Ikeo K."/>
            <person name="Iwama A."/>
            <person name="Ishikawa T."/>
            <person name="Jakt M."/>
            <person name="Kanapin A."/>
            <person name="Katoh M."/>
            <person name="Kawasawa Y."/>
            <person name="Kelso J."/>
            <person name="Kitamura H."/>
            <person name="Kitano H."/>
            <person name="Kollias G."/>
            <person name="Krishnan S.P."/>
            <person name="Kruger A."/>
            <person name="Kummerfeld S.K."/>
            <person name="Kurochkin I.V."/>
            <person name="Lareau L.F."/>
            <person name="Lazarevic D."/>
            <person name="Lipovich L."/>
            <person name="Liu J."/>
            <person name="Liuni S."/>
            <person name="McWilliam S."/>
            <person name="Madan Babu M."/>
            <person name="Madera M."/>
            <person name="Marchionni L."/>
            <person name="Matsuda H."/>
            <person name="Matsuzawa S."/>
            <person name="Miki H."/>
            <person name="Mignone F."/>
            <person name="Miyake S."/>
            <person name="Morris K."/>
            <person name="Mottagui-Tabar S."/>
            <person name="Mulder N."/>
            <person name="Nakano N."/>
            <person name="Nakauchi H."/>
            <person name="Ng P."/>
            <person name="Nilsson R."/>
            <person name="Nishiguchi S."/>
            <person name="Nishikawa S."/>
            <person name="Nori F."/>
            <person name="Ohara O."/>
            <person name="Okazaki Y."/>
            <person name="Orlando V."/>
            <person name="Pang K.C."/>
            <person name="Pavan W.J."/>
            <person name="Pavesi G."/>
            <person name="Pesole G."/>
            <person name="Petrovsky N."/>
            <person name="Piazza S."/>
            <person name="Reed J."/>
            <person name="Reid J.F."/>
            <person name="Ring B.Z."/>
            <person name="Ringwald M."/>
            <person name="Rost B."/>
            <person name="Ruan Y."/>
            <person name="Salzberg S.L."/>
            <person name="Sandelin A."/>
            <person name="Schneider C."/>
            <person name="Schoenbach C."/>
            <person name="Sekiguchi K."/>
            <person name="Semple C.A."/>
            <person name="Seno S."/>
            <person name="Sessa L."/>
            <person name="Sheng Y."/>
            <person name="Shibata Y."/>
            <person name="Shimada H."/>
            <person name="Shimada K."/>
            <person name="Silva D."/>
            <person name="Sinclair B."/>
            <person name="Sperling S."/>
            <person name="Stupka E."/>
            <person name="Sugiura K."/>
            <person name="Sultana R."/>
            <person name="Takenaka Y."/>
            <person name="Taki K."/>
            <person name="Tammoja K."/>
            <person name="Tan S.L."/>
            <person name="Tang S."/>
            <person name="Taylor M.S."/>
            <person name="Tegner J."/>
            <person name="Teichmann S.A."/>
            <person name="Ueda H.R."/>
            <person name="van Nimwegen E."/>
            <person name="Verardo R."/>
            <person name="Wei C.L."/>
            <person name="Yagi K."/>
            <person name="Yamanishi H."/>
            <person name="Zabarovsky E."/>
            <person name="Zhu S."/>
            <person name="Zimmer A."/>
            <person name="Hide W."/>
            <person name="Bult C."/>
            <person name="Grimmond S.M."/>
            <person name="Teasdale R.D."/>
            <person name="Liu E.T."/>
            <person name="Brusic V."/>
            <person name="Quackenbush J."/>
            <person name="Wahlestedt C."/>
            <person name="Mattick J.S."/>
            <person name="Hume D.A."/>
            <person name="Kai C."/>
            <person name="Sasaki D."/>
            <person name="Tomaru Y."/>
            <person name="Fukuda S."/>
            <person name="Kanamori-Katayama M."/>
            <person name="Suzuki M."/>
            <person name="Aoki J."/>
            <person name="Arakawa T."/>
            <person name="Iida J."/>
            <person name="Imamura K."/>
            <person name="Itoh M."/>
            <person name="Kato T."/>
            <person name="Kawaji H."/>
            <person name="Kawagashira N."/>
            <person name="Kawashima T."/>
            <person name="Kojima M."/>
            <person name="Kondo S."/>
            <person name="Konno H."/>
            <person name="Nakano K."/>
            <person name="Ninomiya N."/>
            <person name="Nishio T."/>
            <person name="Okada M."/>
            <person name="Plessy C."/>
            <person name="Shibata K."/>
            <person name="Shiraki T."/>
            <person name="Suzuki S."/>
            <person name="Tagami M."/>
            <person name="Waki K."/>
            <person name="Watahiki A."/>
            <person name="Okamura-Oho Y."/>
            <person name="Suzuki H."/>
            <person name="Kawai J."/>
            <person name="Hayashizaki Y."/>
        </authorList>
    </citation>
    <scope>NUCLEOTIDE SEQUENCE [LARGE SCALE MRNA]</scope>
    <source>
        <strain>C57BL/6J</strain>
        <tissue>Thymus</tissue>
    </source>
</reference>
<reference key="2">
    <citation type="journal article" date="2004" name="Genome Res.">
        <title>The status, quality, and expansion of the NIH full-length cDNA project: the Mammalian Gene Collection (MGC).</title>
        <authorList>
            <consortium name="The MGC Project Team"/>
        </authorList>
    </citation>
    <scope>NUCLEOTIDE SEQUENCE [LARGE SCALE MRNA]</scope>
    <source>
        <strain>C57BL/6NCr</strain>
        <tissue>Hematopoietic stem cell</tissue>
    </source>
</reference>
<reference key="3">
    <citation type="journal article" date="2010" name="Cell">
        <title>A tissue-specific atlas of mouse protein phosphorylation and expression.</title>
        <authorList>
            <person name="Huttlin E.L."/>
            <person name="Jedrychowski M.P."/>
            <person name="Elias J.E."/>
            <person name="Goswami T."/>
            <person name="Rad R."/>
            <person name="Beausoleil S.A."/>
            <person name="Villen J."/>
            <person name="Haas W."/>
            <person name="Sowa M.E."/>
            <person name="Gygi S.P."/>
        </authorList>
    </citation>
    <scope>PHOSPHORYLATION [LARGE SCALE ANALYSIS] AT SER-93 AND SER-143</scope>
    <scope>IDENTIFICATION BY MASS SPECTROMETRY [LARGE SCALE ANALYSIS]</scope>
    <source>
        <tissue>Lung</tissue>
        <tissue>Spleen</tissue>
    </source>
</reference>
<reference key="4">
    <citation type="journal article" date="2010" name="J. Biol. Chem.">
        <title>Down-regulation of protein-tyrosine phosphatases activates an immune receptor in the absence of its translocation into lipid rafts.</title>
        <authorList>
            <person name="Heneberg P."/>
            <person name="Draberova L."/>
            <person name="Bambouskova M."/>
            <person name="Pompach P."/>
            <person name="Draber P."/>
        </authorList>
    </citation>
    <scope>TISSUE SPECIFICITY</scope>
    <scope>SUBCELLULAR LOCATION</scope>
    <scope>OXIDATION AT CYS-290</scope>
    <scope>ACTIVITY REGULATION</scope>
    <scope>IDENTIFICATION BY MASS SPECTROMETRY</scope>
</reference>
<sequence>MVQACEGRSRAQLPTLSLGADMTQPPPTKAPAKKHVRLQERRGSSVALMLDVQSLGTVEPICSVNTPREVTLHFLRTAGHPLTRWTLQHQPPSPKQLEEEFLKIPSNFVNPEDLDIPGHASKDRYKTILPNPQSRVCLGRAQSQEDSDYINANYIRGYDGKEKVYIATQGPMPNTVADFWEMVWQEDVSLIVMLTQLREGKEKCVHYWPTEEEAYGPFQIRIQDMKEHPEYTVRQLTIQHQQECRSVKHILFSAWPDHQTPESAGPLLRLVAEVETPETAANSGPIVVHCSAGIGRTGCFIATRIGCQQLKARGEVDILGIVCQLRLDRGGMIQTAEQYQFLHHTLALYAAQLPPEPNP</sequence>
<dbReference type="EC" id="3.1.3.48"/>
<dbReference type="EMBL" id="AK083305">
    <property type="protein sequence ID" value="BAC38856.1"/>
    <property type="molecule type" value="mRNA"/>
</dbReference>
<dbReference type="EMBL" id="BC098475">
    <property type="protein sequence ID" value="AAH98475.1"/>
    <property type="molecule type" value="mRNA"/>
</dbReference>
<dbReference type="CCDS" id="CCDS15315.1"/>
<dbReference type="RefSeq" id="NP_001343311.1">
    <property type="nucleotide sequence ID" value="NM_001356382.1"/>
</dbReference>
<dbReference type="RefSeq" id="NP_796055.1">
    <property type="nucleotide sequence ID" value="NM_177081.4"/>
</dbReference>
<dbReference type="RefSeq" id="XP_006529759.1">
    <property type="nucleotide sequence ID" value="XM_006529696.5"/>
</dbReference>
<dbReference type="RefSeq" id="XP_006529760.1">
    <property type="nucleotide sequence ID" value="XM_006529697.3"/>
</dbReference>
<dbReference type="RefSeq" id="XP_006529761.1">
    <property type="nucleotide sequence ID" value="XM_006529698.5"/>
</dbReference>
<dbReference type="SMR" id="Q8BUM3"/>
<dbReference type="BioGRID" id="235789">
    <property type="interactions" value="1"/>
</dbReference>
<dbReference type="FunCoup" id="Q8BUM3">
    <property type="interactions" value="416"/>
</dbReference>
<dbReference type="STRING" id="10090.ENSMUSP00000045803"/>
<dbReference type="iPTMnet" id="Q8BUM3"/>
<dbReference type="PhosphoSitePlus" id="Q8BUM3"/>
<dbReference type="jPOST" id="Q8BUM3"/>
<dbReference type="PaxDb" id="10090-ENSMUSP00000045803"/>
<dbReference type="ProteomicsDB" id="301959"/>
<dbReference type="Antibodypedia" id="20651">
    <property type="antibodies" value="334 antibodies from 30 providers"/>
</dbReference>
<dbReference type="DNASU" id="320139"/>
<dbReference type="Ensembl" id="ENSMUST00000049449.11">
    <property type="protein sequence ID" value="ENSMUSP00000045803.5"/>
    <property type="gene ID" value="ENSMUSG00000031506.12"/>
</dbReference>
<dbReference type="Ensembl" id="ENSMUST00000167080.3">
    <property type="protein sequence ID" value="ENSMUSP00000129474.2"/>
    <property type="gene ID" value="ENSMUSG00000031506.12"/>
</dbReference>
<dbReference type="Ensembl" id="ENSMUST00000187985.7">
    <property type="protein sequence ID" value="ENSMUSP00000141133.2"/>
    <property type="gene ID" value="ENSMUSG00000031506.12"/>
</dbReference>
<dbReference type="GeneID" id="320139"/>
<dbReference type="KEGG" id="mmu:320139"/>
<dbReference type="UCSC" id="uc007css.1">
    <property type="organism name" value="mouse"/>
</dbReference>
<dbReference type="AGR" id="MGI:2156893"/>
<dbReference type="CTD" id="5778"/>
<dbReference type="MGI" id="MGI:2156893">
    <property type="gene designation" value="Ptpn7"/>
</dbReference>
<dbReference type="VEuPathDB" id="HostDB:ENSMUSG00000031506"/>
<dbReference type="eggNOG" id="KOG0789">
    <property type="taxonomic scope" value="Eukaryota"/>
</dbReference>
<dbReference type="GeneTree" id="ENSGT00940000160979"/>
<dbReference type="HOGENOM" id="CLU_001645_10_3_1"/>
<dbReference type="InParanoid" id="Q8BUM3"/>
<dbReference type="OMA" id="GYDGREK"/>
<dbReference type="OrthoDB" id="9993594at2759"/>
<dbReference type="PhylomeDB" id="Q8BUM3"/>
<dbReference type="TreeFam" id="TF331016"/>
<dbReference type="Reactome" id="R-MMU-5675221">
    <property type="pathway name" value="Negative regulation of MAPK pathway"/>
</dbReference>
<dbReference type="BioGRID-ORCS" id="320139">
    <property type="hits" value="5 hits in 81 CRISPR screens"/>
</dbReference>
<dbReference type="ChiTaRS" id="Ptpn7">
    <property type="organism name" value="mouse"/>
</dbReference>
<dbReference type="PRO" id="PR:Q8BUM3"/>
<dbReference type="Proteomes" id="UP000000589">
    <property type="component" value="Chromosome 1"/>
</dbReference>
<dbReference type="RNAct" id="Q8BUM3">
    <property type="molecule type" value="protein"/>
</dbReference>
<dbReference type="Bgee" id="ENSMUSG00000031506">
    <property type="expression patterns" value="Expressed in thymus and 49 other cell types or tissues"/>
</dbReference>
<dbReference type="GO" id="GO:0009898">
    <property type="term" value="C:cytoplasmic side of plasma membrane"/>
    <property type="evidence" value="ECO:0007669"/>
    <property type="project" value="Ensembl"/>
</dbReference>
<dbReference type="GO" id="GO:0005829">
    <property type="term" value="C:cytosol"/>
    <property type="evidence" value="ECO:0007669"/>
    <property type="project" value="Ensembl"/>
</dbReference>
<dbReference type="GO" id="GO:0072686">
    <property type="term" value="C:mitotic spindle"/>
    <property type="evidence" value="ECO:0007669"/>
    <property type="project" value="Ensembl"/>
</dbReference>
<dbReference type="GO" id="GO:0004725">
    <property type="term" value="F:protein tyrosine phosphatase activity"/>
    <property type="evidence" value="ECO:0000304"/>
    <property type="project" value="MGI"/>
</dbReference>
<dbReference type="CDD" id="cd14612">
    <property type="entry name" value="PTPc-N7"/>
    <property type="match status" value="1"/>
</dbReference>
<dbReference type="FunFam" id="3.90.190.10:FF:000020">
    <property type="entry name" value="Tyrosine-protein phosphatase non-receptor type 5"/>
    <property type="match status" value="1"/>
</dbReference>
<dbReference type="Gene3D" id="3.90.190.10">
    <property type="entry name" value="Protein tyrosine phosphatase superfamily"/>
    <property type="match status" value="1"/>
</dbReference>
<dbReference type="InterPro" id="IPR029021">
    <property type="entry name" value="Prot-tyrosine_phosphatase-like"/>
</dbReference>
<dbReference type="InterPro" id="IPR000242">
    <property type="entry name" value="PTP_cat"/>
</dbReference>
<dbReference type="InterPro" id="IPR016130">
    <property type="entry name" value="Tyr_Pase_AS"/>
</dbReference>
<dbReference type="InterPro" id="IPR003595">
    <property type="entry name" value="Tyr_Pase_cat"/>
</dbReference>
<dbReference type="InterPro" id="IPR000387">
    <property type="entry name" value="Tyr_Pase_dom"/>
</dbReference>
<dbReference type="InterPro" id="IPR008356">
    <property type="entry name" value="Tyr_Pase_KIM-con"/>
</dbReference>
<dbReference type="PANTHER" id="PTHR46198">
    <property type="entry name" value="PROTEIN-TYROSINE-PHOSPHATASE"/>
    <property type="match status" value="1"/>
</dbReference>
<dbReference type="PANTHER" id="PTHR46198:SF3">
    <property type="entry name" value="PROTEIN-TYROSINE-PHOSPHATASE"/>
    <property type="match status" value="1"/>
</dbReference>
<dbReference type="Pfam" id="PF00102">
    <property type="entry name" value="Y_phosphatase"/>
    <property type="match status" value="1"/>
</dbReference>
<dbReference type="PRINTS" id="PR01778">
    <property type="entry name" value="KIMPTPASE"/>
</dbReference>
<dbReference type="PRINTS" id="PR00700">
    <property type="entry name" value="PRTYPHPHTASE"/>
</dbReference>
<dbReference type="SMART" id="SM00194">
    <property type="entry name" value="PTPc"/>
    <property type="match status" value="1"/>
</dbReference>
<dbReference type="SMART" id="SM00404">
    <property type="entry name" value="PTPc_motif"/>
    <property type="match status" value="1"/>
</dbReference>
<dbReference type="SUPFAM" id="SSF52799">
    <property type="entry name" value="(Phosphotyrosine protein) phosphatases II"/>
    <property type="match status" value="1"/>
</dbReference>
<dbReference type="PROSITE" id="PS00383">
    <property type="entry name" value="TYR_PHOSPHATASE_1"/>
    <property type="match status" value="1"/>
</dbReference>
<dbReference type="PROSITE" id="PS50056">
    <property type="entry name" value="TYR_PHOSPHATASE_2"/>
    <property type="match status" value="1"/>
</dbReference>
<dbReference type="PROSITE" id="PS50055">
    <property type="entry name" value="TYR_PHOSPHATASE_PTP"/>
    <property type="match status" value="1"/>
</dbReference>